<reference key="1">
    <citation type="journal article" date="1999" name="Nature">
        <title>Sequence and analysis of chromosome 2 of the plant Arabidopsis thaliana.</title>
        <authorList>
            <person name="Lin X."/>
            <person name="Kaul S."/>
            <person name="Rounsley S.D."/>
            <person name="Shea T.P."/>
            <person name="Benito M.-I."/>
            <person name="Town C.D."/>
            <person name="Fujii C.Y."/>
            <person name="Mason T.M."/>
            <person name="Bowman C.L."/>
            <person name="Barnstead M.E."/>
            <person name="Feldblyum T.V."/>
            <person name="Buell C.R."/>
            <person name="Ketchum K.A."/>
            <person name="Lee J.J."/>
            <person name="Ronning C.M."/>
            <person name="Koo H.L."/>
            <person name="Moffat K.S."/>
            <person name="Cronin L.A."/>
            <person name="Shen M."/>
            <person name="Pai G."/>
            <person name="Van Aken S."/>
            <person name="Umayam L."/>
            <person name="Tallon L.J."/>
            <person name="Gill J.E."/>
            <person name="Adams M.D."/>
            <person name="Carrera A.J."/>
            <person name="Creasy T.H."/>
            <person name="Goodman H.M."/>
            <person name="Somerville C.R."/>
            <person name="Copenhaver G.P."/>
            <person name="Preuss D."/>
            <person name="Nierman W.C."/>
            <person name="White O."/>
            <person name="Eisen J.A."/>
            <person name="Salzberg S.L."/>
            <person name="Fraser C.M."/>
            <person name="Venter J.C."/>
        </authorList>
    </citation>
    <scope>NUCLEOTIDE SEQUENCE [LARGE SCALE GENOMIC DNA]</scope>
    <source>
        <strain>cv. Columbia</strain>
    </source>
</reference>
<reference key="2">
    <citation type="journal article" date="2017" name="Plant J.">
        <title>Araport11: a complete reannotation of the Arabidopsis thaliana reference genome.</title>
        <authorList>
            <person name="Cheng C.Y."/>
            <person name="Krishnakumar V."/>
            <person name="Chan A.P."/>
            <person name="Thibaud-Nissen F."/>
            <person name="Schobel S."/>
            <person name="Town C.D."/>
        </authorList>
    </citation>
    <scope>GENOME REANNOTATION</scope>
    <source>
        <strain>cv. Columbia</strain>
    </source>
</reference>
<reference key="3">
    <citation type="submission" date="2005-03" db="EMBL/GenBank/DDBJ databases">
        <title>Large-scale analysis of RIKEN Arabidopsis full-length (RAFL) cDNAs.</title>
        <authorList>
            <person name="Totoki Y."/>
            <person name="Seki M."/>
            <person name="Ishida J."/>
            <person name="Nakajima M."/>
            <person name="Enju A."/>
            <person name="Kamiya A."/>
            <person name="Narusaka M."/>
            <person name="Shin-i T."/>
            <person name="Nakagawa M."/>
            <person name="Sakamoto N."/>
            <person name="Oishi K."/>
            <person name="Kohara Y."/>
            <person name="Kobayashi M."/>
            <person name="Toyoda A."/>
            <person name="Sakaki Y."/>
            <person name="Sakurai T."/>
            <person name="Iida K."/>
            <person name="Akiyama K."/>
            <person name="Satou M."/>
            <person name="Toyoda T."/>
            <person name="Konagaya A."/>
            <person name="Carninci P."/>
            <person name="Kawai J."/>
            <person name="Hayashizaki Y."/>
            <person name="Shinozaki K."/>
        </authorList>
    </citation>
    <scope>NUCLEOTIDE SEQUENCE [LARGE SCALE MRNA] (ISOFORMS 1 AND 2)</scope>
    <source>
        <strain>cv. Columbia</strain>
    </source>
</reference>
<organism>
    <name type="scientific">Arabidopsis thaliana</name>
    <name type="common">Mouse-ear cress</name>
    <dbReference type="NCBI Taxonomy" id="3702"/>
    <lineage>
        <taxon>Eukaryota</taxon>
        <taxon>Viridiplantae</taxon>
        <taxon>Streptophyta</taxon>
        <taxon>Embryophyta</taxon>
        <taxon>Tracheophyta</taxon>
        <taxon>Spermatophyta</taxon>
        <taxon>Magnoliopsida</taxon>
        <taxon>eudicotyledons</taxon>
        <taxon>Gunneridae</taxon>
        <taxon>Pentapetalae</taxon>
        <taxon>rosids</taxon>
        <taxon>malvids</taxon>
        <taxon>Brassicales</taxon>
        <taxon>Brassicaceae</taxon>
        <taxon>Camelineae</taxon>
        <taxon>Arabidopsis</taxon>
    </lineage>
</organism>
<keyword id="KW-0025">Alternative splicing</keyword>
<keyword id="KW-0238">DNA-binding</keyword>
<keyword id="KW-0413">Isomerase</keyword>
<keyword id="KW-0460">Magnesium</keyword>
<keyword id="KW-0479">Metal-binding</keyword>
<keyword id="KW-1185">Reference proteome</keyword>
<keyword id="KW-0799">Topoisomerase</keyword>
<name>TOP3B_ARATH</name>
<gene>
    <name type="ordered locus">At2g32000</name>
    <name type="ORF">F22D22.25</name>
</gene>
<sequence>MANLLRVLMVAEKPSIALSIASVLSHGQMSTRRGSTEVHEFDGMFRGFKAHYRVTSVIGHVFSVDFPEKYQNWATIDPQDLFDAPIIKKESNPKAHICRHLSNEARGCSYMVLWLDCDREGENICFEVIESTGFDMKDSKRKVYRARFSSVTEKDISKAMDNLVEPNRDEALAVDARQEIDLKVGVAFSRFQTSYFQGKYQNLDCRVISYGPCQTPTLGFCVQRYMHINTFKPEKFWALRPYIRKDGYELQLEWERRRLFDLEAATVFQKLVVEGRTAKVMDVSEKQEVKGRPAGLNTVNLLKVASSALGFGPQTAMHLAERLYTQGFISYPRTESTAYPSSFDFTDTLRAQVSNPVWGGYVQRLLSDGFHMPKSGTDAGDHPPITPMRAATEVMVGGDAWRLYQYVCQHFLGTVSPNCKYIRTKVELSIGGETFHCTGQRVTEKGFTAIMPWSAVDEKKLPSFLKGERIEVLRVELYEGNTAPPDYLTESELISLMEKHGIGTDASIAVHINNIGERNYVQVQSGRKMVPTALGITLIRGYQCIDPDLCLPDIRSFIEQQITLVAKGQADHSHVVQHVIQQFRRKFSYFVQQIEHMDALFEAQFSPLADSGRALSKCGKCLRYMKHITAVPPRLFCGTCEEVYYLPQKGTVKLYKELTCPLDNFELVIYSVPGPEGKSFPLCPYCYNSPPFEGIDTLFGASKTPNAPAKTKTGAGMPCSLCPHPTCQHSVRNQGVCACPECEGTLVLDPVSFPKWKLNCNLCSCIVLLPEGAHRITTTSNRCPECDSAIIEIDFNKKTTPLENGATLHQGCVLCDELLLSLVEVKHGRSFVRRGGRGRGRGRGRGRGGRRGSKSVDPKMSFRDF</sequence>
<comment type="function">
    <text evidence="1">Releases the supercoiling and torsional tension of DNA introduced during the DNA replication and transcription by transiently cleaving and rejoining one strand of the DNA duplex. Introduces a single-strand break via transesterification at a target site in duplex DNA. The scissile phosphodiester is attacked by the catalytic tyrosine of the enzyme, resulting in the formation of a DNA-(5'-phosphotyrosyl)-enzyme intermediate and the expulsion of a 3'-OH DNA strand. The free DNA strand than undergoes passage around the unbroken strand thus removing DNA supercoils. Finally, in the religation step, the DNA 3'-OH attacks the covalent intermediate to expel the active-site tyrosine and restore the DNA phosphodiester backbone (By similarity).</text>
</comment>
<comment type="catalytic activity">
    <reaction evidence="4">
        <text>ATP-independent breakage of single-stranded DNA, followed by passage and rejoining.</text>
        <dbReference type="EC" id="5.6.2.1"/>
    </reaction>
</comment>
<comment type="cofactor">
    <cofactor evidence="2">
        <name>Mg(2+)</name>
        <dbReference type="ChEBI" id="CHEBI:18420"/>
    </cofactor>
    <text evidence="2">Binds two Mg(2+) per subunit.</text>
</comment>
<comment type="alternative products">
    <event type="alternative splicing"/>
    <isoform>
        <id>F4ISQ7-1</id>
        <name>1</name>
        <sequence type="displayed"/>
    </isoform>
    <isoform>
        <id>F4ISQ7-2</id>
        <name>2</name>
        <sequence type="described" ref="VSP_055207"/>
    </isoform>
</comment>
<comment type="similarity">
    <text evidence="3 7">Belongs to the type IA topoisomerase family.</text>
</comment>
<comment type="sequence caution" evidence="7">
    <conflict type="erroneous gene model prediction">
        <sequence resource="EMBL-CDS" id="AAD15404"/>
    </conflict>
</comment>
<dbReference type="EC" id="5.6.2.1" evidence="4"/>
<dbReference type="EMBL" id="AC006223">
    <property type="protein sequence ID" value="AAD15404.1"/>
    <property type="status" value="ALT_SEQ"/>
    <property type="molecule type" value="Genomic_DNA"/>
</dbReference>
<dbReference type="EMBL" id="CP002685">
    <property type="protein sequence ID" value="AEC08619.1"/>
    <property type="molecule type" value="Genomic_DNA"/>
</dbReference>
<dbReference type="EMBL" id="CP002685">
    <property type="protein sequence ID" value="AEC08620.1"/>
    <property type="molecule type" value="Genomic_DNA"/>
</dbReference>
<dbReference type="EMBL" id="AK175789">
    <property type="protein sequence ID" value="BAD43552.1"/>
    <property type="molecule type" value="mRNA"/>
</dbReference>
<dbReference type="EMBL" id="AK175923">
    <property type="protein sequence ID" value="BAD43686.1"/>
    <property type="molecule type" value="mRNA"/>
</dbReference>
<dbReference type="EMBL" id="AK221174">
    <property type="protein sequence ID" value="BAD95240.1"/>
    <property type="molecule type" value="mRNA"/>
</dbReference>
<dbReference type="PIR" id="G84727">
    <property type="entry name" value="G84727"/>
</dbReference>
<dbReference type="RefSeq" id="NP_001031463.1">
    <molecule id="F4ISQ7-2"/>
    <property type="nucleotide sequence ID" value="NM_001036386.1"/>
</dbReference>
<dbReference type="RefSeq" id="NP_180760.2">
    <molecule id="F4ISQ7-1"/>
    <property type="nucleotide sequence ID" value="NM_128760.4"/>
</dbReference>
<dbReference type="SMR" id="F4ISQ7"/>
<dbReference type="FunCoup" id="F4ISQ7">
    <property type="interactions" value="3413"/>
</dbReference>
<dbReference type="STRING" id="3702.F4ISQ7"/>
<dbReference type="PaxDb" id="3702-AT2G32000.1"/>
<dbReference type="ProteomicsDB" id="234443">
    <molecule id="F4ISQ7-1"/>
</dbReference>
<dbReference type="EnsemblPlants" id="AT2G32000.1">
    <molecule id="F4ISQ7-1"/>
    <property type="protein sequence ID" value="AT2G32000.1"/>
    <property type="gene ID" value="AT2G32000"/>
</dbReference>
<dbReference type="EnsemblPlants" id="AT2G32000.2">
    <molecule id="F4ISQ7-2"/>
    <property type="protein sequence ID" value="AT2G32000.2"/>
    <property type="gene ID" value="AT2G32000"/>
</dbReference>
<dbReference type="GeneID" id="817760"/>
<dbReference type="Gramene" id="AT2G32000.1">
    <molecule id="F4ISQ7-1"/>
    <property type="protein sequence ID" value="AT2G32000.1"/>
    <property type="gene ID" value="AT2G32000"/>
</dbReference>
<dbReference type="Gramene" id="AT2G32000.2">
    <molecule id="F4ISQ7-2"/>
    <property type="protein sequence ID" value="AT2G32000.2"/>
    <property type="gene ID" value="AT2G32000"/>
</dbReference>
<dbReference type="KEGG" id="ath:AT2G32000"/>
<dbReference type="Araport" id="AT2G32000"/>
<dbReference type="TAIR" id="AT2G32000"/>
<dbReference type="eggNOG" id="KOG1957">
    <property type="taxonomic scope" value="Eukaryota"/>
</dbReference>
<dbReference type="HOGENOM" id="CLU_002929_1_0_1"/>
<dbReference type="InParanoid" id="F4ISQ7"/>
<dbReference type="OMA" id="GKWSFAN"/>
<dbReference type="PRO" id="PR:F4ISQ7"/>
<dbReference type="Proteomes" id="UP000006548">
    <property type="component" value="Chromosome 2"/>
</dbReference>
<dbReference type="ExpressionAtlas" id="F4ISQ7">
    <property type="expression patterns" value="baseline and differential"/>
</dbReference>
<dbReference type="GO" id="GO:0003677">
    <property type="term" value="F:DNA binding"/>
    <property type="evidence" value="ECO:0007669"/>
    <property type="project" value="UniProtKB-KW"/>
</dbReference>
<dbReference type="GO" id="GO:0003917">
    <property type="term" value="F:DNA topoisomerase type I (single strand cut, ATP-independent) activity"/>
    <property type="evidence" value="ECO:0007669"/>
    <property type="project" value="UniProtKB-EC"/>
</dbReference>
<dbReference type="GO" id="GO:0046872">
    <property type="term" value="F:metal ion binding"/>
    <property type="evidence" value="ECO:0007669"/>
    <property type="project" value="UniProtKB-KW"/>
</dbReference>
<dbReference type="GO" id="GO:0003729">
    <property type="term" value="F:mRNA binding"/>
    <property type="evidence" value="ECO:0007005"/>
    <property type="project" value="TAIR"/>
</dbReference>
<dbReference type="GO" id="GO:0006265">
    <property type="term" value="P:DNA topological change"/>
    <property type="evidence" value="ECO:0007669"/>
    <property type="project" value="InterPro"/>
</dbReference>
<dbReference type="CDD" id="cd00186">
    <property type="entry name" value="TOP1Ac"/>
    <property type="match status" value="1"/>
</dbReference>
<dbReference type="CDD" id="cd03362">
    <property type="entry name" value="TOPRIM_TopoIA_TopoIII"/>
    <property type="match status" value="1"/>
</dbReference>
<dbReference type="FunFam" id="1.10.290.10:FF:000001">
    <property type="entry name" value="DNA topoisomerase"/>
    <property type="match status" value="1"/>
</dbReference>
<dbReference type="FunFam" id="3.40.50.140:FF:000002">
    <property type="entry name" value="DNA topoisomerase"/>
    <property type="match status" value="1"/>
</dbReference>
<dbReference type="Gene3D" id="3.40.50.140">
    <property type="match status" value="1"/>
</dbReference>
<dbReference type="Gene3D" id="1.10.460.10">
    <property type="entry name" value="Topoisomerase I, domain 2"/>
    <property type="match status" value="1"/>
</dbReference>
<dbReference type="Gene3D" id="2.70.20.10">
    <property type="entry name" value="Topoisomerase I, domain 3"/>
    <property type="match status" value="1"/>
</dbReference>
<dbReference type="Gene3D" id="1.10.290.10">
    <property type="entry name" value="Topoisomerase I, domain 4"/>
    <property type="match status" value="1"/>
</dbReference>
<dbReference type="InterPro" id="IPR000380">
    <property type="entry name" value="Topo_IA"/>
</dbReference>
<dbReference type="InterPro" id="IPR003601">
    <property type="entry name" value="Topo_IA_2"/>
</dbReference>
<dbReference type="InterPro" id="IPR023406">
    <property type="entry name" value="Topo_IA_AS"/>
</dbReference>
<dbReference type="InterPro" id="IPR013497">
    <property type="entry name" value="Topo_IA_cen"/>
</dbReference>
<dbReference type="InterPro" id="IPR013824">
    <property type="entry name" value="Topo_IA_cen_sub1"/>
</dbReference>
<dbReference type="InterPro" id="IPR013825">
    <property type="entry name" value="Topo_IA_cen_sub2"/>
</dbReference>
<dbReference type="InterPro" id="IPR013826">
    <property type="entry name" value="Topo_IA_cen_sub3"/>
</dbReference>
<dbReference type="InterPro" id="IPR023405">
    <property type="entry name" value="Topo_IA_core_domain"/>
</dbReference>
<dbReference type="InterPro" id="IPR003602">
    <property type="entry name" value="Topo_IA_DNA-bd_dom"/>
</dbReference>
<dbReference type="InterPro" id="IPR006171">
    <property type="entry name" value="TOPRIM_dom"/>
</dbReference>
<dbReference type="InterPro" id="IPR034144">
    <property type="entry name" value="TOPRIM_TopoIII"/>
</dbReference>
<dbReference type="InterPro" id="IPR056452">
    <property type="entry name" value="Zn_ribbon_TOP3B"/>
</dbReference>
<dbReference type="PANTHER" id="PTHR11390:SF20">
    <property type="entry name" value="DNA TOPOISOMERASE 3-BETA-1"/>
    <property type="match status" value="1"/>
</dbReference>
<dbReference type="PANTHER" id="PTHR11390">
    <property type="entry name" value="PROKARYOTIC DNA TOPOISOMERASE"/>
    <property type="match status" value="1"/>
</dbReference>
<dbReference type="Pfam" id="PF01131">
    <property type="entry name" value="Topoisom_bac"/>
    <property type="match status" value="1"/>
</dbReference>
<dbReference type="Pfam" id="PF01751">
    <property type="entry name" value="Toprim"/>
    <property type="match status" value="1"/>
</dbReference>
<dbReference type="Pfam" id="PF23546">
    <property type="entry name" value="Zn_ribbon_TOP3B"/>
    <property type="match status" value="1"/>
</dbReference>
<dbReference type="PRINTS" id="PR00417">
    <property type="entry name" value="PRTPISMRASEI"/>
</dbReference>
<dbReference type="SMART" id="SM00437">
    <property type="entry name" value="TOP1Ac"/>
    <property type="match status" value="1"/>
</dbReference>
<dbReference type="SMART" id="SM00436">
    <property type="entry name" value="TOP1Bc"/>
    <property type="match status" value="1"/>
</dbReference>
<dbReference type="SMART" id="SM00493">
    <property type="entry name" value="TOPRIM"/>
    <property type="match status" value="1"/>
</dbReference>
<dbReference type="SUPFAM" id="SSF56712">
    <property type="entry name" value="Prokaryotic type I DNA topoisomerase"/>
    <property type="match status" value="1"/>
</dbReference>
<dbReference type="PROSITE" id="PS00396">
    <property type="entry name" value="TOPO_IA_1"/>
    <property type="match status" value="1"/>
</dbReference>
<dbReference type="PROSITE" id="PS52039">
    <property type="entry name" value="TOPO_IA_2"/>
    <property type="match status" value="1"/>
</dbReference>
<dbReference type="PROSITE" id="PS50880">
    <property type="entry name" value="TOPRIM"/>
    <property type="match status" value="1"/>
</dbReference>
<evidence type="ECO:0000250" key="1"/>
<evidence type="ECO:0000255" key="2">
    <source>
        <dbReference type="PROSITE-ProRule" id="PRU00995"/>
    </source>
</evidence>
<evidence type="ECO:0000255" key="3">
    <source>
        <dbReference type="PROSITE-ProRule" id="PRU01383"/>
    </source>
</evidence>
<evidence type="ECO:0000255" key="4">
    <source>
        <dbReference type="PROSITE-ProRule" id="PRU10131"/>
    </source>
</evidence>
<evidence type="ECO:0000256" key="5">
    <source>
        <dbReference type="SAM" id="MobiDB-lite"/>
    </source>
</evidence>
<evidence type="ECO:0000303" key="6">
    <source ref="3"/>
</evidence>
<evidence type="ECO:0000305" key="7"/>
<accession>F4ISQ7</accession>
<accession>Q56YZ6</accession>
<accession>Q680E4</accession>
<accession>Q9SKZ9</accession>
<protein>
    <recommendedName>
        <fullName>DNA topoisomerase 3-beta</fullName>
        <ecNumber evidence="4">5.6.2.1</ecNumber>
    </recommendedName>
</protein>
<feature type="chain" id="PRO_0000429773" description="DNA topoisomerase 3-beta">
    <location>
        <begin position="1"/>
        <end position="865"/>
    </location>
</feature>
<feature type="domain" description="Toprim" evidence="2">
    <location>
        <begin position="6"/>
        <end position="151"/>
    </location>
</feature>
<feature type="domain" description="Topo IA-type catalytic" evidence="3">
    <location>
        <begin position="167"/>
        <end position="587"/>
    </location>
</feature>
<feature type="region of interest" description="Interaction with DNA" evidence="1">
    <location>
        <begin position="209"/>
        <end position="214"/>
    </location>
</feature>
<feature type="region of interest" description="Disordered" evidence="5">
    <location>
        <begin position="833"/>
        <end position="865"/>
    </location>
</feature>
<feature type="compositionally biased region" description="Basic residues" evidence="5">
    <location>
        <begin position="833"/>
        <end position="853"/>
    </location>
</feature>
<feature type="compositionally biased region" description="Basic and acidic residues" evidence="5">
    <location>
        <begin position="854"/>
        <end position="865"/>
    </location>
</feature>
<feature type="active site" description="O-(5'-phospho-DNA)-tyrosine intermediate" evidence="3">
    <location>
        <position position="331"/>
    </location>
</feature>
<feature type="binding site" evidence="2">
    <location>
        <position position="12"/>
    </location>
    <ligand>
        <name>Mg(2+)</name>
        <dbReference type="ChEBI" id="CHEBI:18420"/>
        <label>1</label>
        <note>catalytic</note>
    </ligand>
</feature>
<feature type="binding site" evidence="2">
    <location>
        <position position="116"/>
    </location>
    <ligand>
        <name>Mg(2+)</name>
        <dbReference type="ChEBI" id="CHEBI:18420"/>
        <label>1</label>
        <note>catalytic</note>
    </ligand>
</feature>
<feature type="binding site" evidence="2">
    <location>
        <position position="116"/>
    </location>
    <ligand>
        <name>Mg(2+)</name>
        <dbReference type="ChEBI" id="CHEBI:18420"/>
        <label>2</label>
    </ligand>
</feature>
<feature type="binding site" evidence="2">
    <location>
        <position position="118"/>
    </location>
    <ligand>
        <name>Mg(2+)</name>
        <dbReference type="ChEBI" id="CHEBI:18420"/>
        <label>2</label>
    </ligand>
</feature>
<feature type="site" description="Interaction with DNA" evidence="2">
    <location>
        <position position="73"/>
    </location>
</feature>
<feature type="site" description="Interaction with DNA" evidence="2">
    <location>
        <position position="190"/>
    </location>
</feature>
<feature type="site" description="Interaction with DNA" evidence="2">
    <location>
        <position position="197"/>
    </location>
</feature>
<feature type="site" description="Interaction with DNA" evidence="2">
    <location>
        <position position="333"/>
    </location>
</feature>
<feature type="splice variant" id="VSP_055207" description="In isoform 2." evidence="6">
    <original>MANLLRVLMVAEKPSIALSIASVLSHGQMSTRRGSTEVHEFDGMFRGFKAHYRVTSVIGHVFSV</original>
    <variation>MARCLQGEAVQRCMNLMACFEASKHIIELHLLSVMFS</variation>
    <location>
        <begin position="1"/>
        <end position="64"/>
    </location>
</feature>
<feature type="sequence conflict" description="In Ref. 3; BAD95240." evidence="7" ref="3">
    <original>R</original>
    <variation>G</variation>
    <location>
        <position position="33"/>
    </location>
</feature>
<feature type="sequence conflict" description="In Ref. 3; BAD95240." evidence="7" ref="3">
    <original>D</original>
    <variation>G</variation>
    <location>
        <position position="83"/>
    </location>
</feature>
<feature type="sequence conflict" description="In Ref. 3; BAD95240." evidence="7" ref="3">
    <original>Y</original>
    <variation>C</variation>
    <location>
        <position position="242"/>
    </location>
</feature>
<feature type="sequence conflict" description="In Ref. 3; BAD95240." evidence="7" ref="3">
    <original>D</original>
    <variation>V</variation>
    <location>
        <position position="399"/>
    </location>
</feature>
<feature type="sequence conflict" description="In Ref. 3; BAD95240." evidence="7" ref="3">
    <original>T</original>
    <variation>I</variation>
    <location>
        <position position="659"/>
    </location>
</feature>
<proteinExistence type="evidence at transcript level"/>